<sequence length="65" mass="7789">MVGVQLMDNETIDKLLKRFKKKYERAGVLKEFRKRAYYTKPSVDDRLKRARSKRRAQRANEESNA</sequence>
<dbReference type="EMBL" id="CP001100">
    <property type="protein sequence ID" value="ACF13821.1"/>
    <property type="molecule type" value="Genomic_DNA"/>
</dbReference>
<dbReference type="RefSeq" id="WP_012499905.1">
    <property type="nucleotide sequence ID" value="NC_011026.1"/>
</dbReference>
<dbReference type="SMR" id="B3QZC8"/>
<dbReference type="STRING" id="517418.Ctha_1358"/>
<dbReference type="KEGG" id="cts:Ctha_1358"/>
<dbReference type="eggNOG" id="COG0828">
    <property type="taxonomic scope" value="Bacteria"/>
</dbReference>
<dbReference type="HOGENOM" id="CLU_159258_2_1_10"/>
<dbReference type="OrthoDB" id="598353at2"/>
<dbReference type="Proteomes" id="UP000001208">
    <property type="component" value="Chromosome"/>
</dbReference>
<dbReference type="GO" id="GO:1990904">
    <property type="term" value="C:ribonucleoprotein complex"/>
    <property type="evidence" value="ECO:0007669"/>
    <property type="project" value="UniProtKB-KW"/>
</dbReference>
<dbReference type="GO" id="GO:0005840">
    <property type="term" value="C:ribosome"/>
    <property type="evidence" value="ECO:0007669"/>
    <property type="project" value="UniProtKB-KW"/>
</dbReference>
<dbReference type="GO" id="GO:0003735">
    <property type="term" value="F:structural constituent of ribosome"/>
    <property type="evidence" value="ECO:0007669"/>
    <property type="project" value="InterPro"/>
</dbReference>
<dbReference type="GO" id="GO:0006412">
    <property type="term" value="P:translation"/>
    <property type="evidence" value="ECO:0007669"/>
    <property type="project" value="UniProtKB-UniRule"/>
</dbReference>
<dbReference type="Gene3D" id="1.20.5.1150">
    <property type="entry name" value="Ribosomal protein S8"/>
    <property type="match status" value="1"/>
</dbReference>
<dbReference type="HAMAP" id="MF_00358">
    <property type="entry name" value="Ribosomal_bS21"/>
    <property type="match status" value="1"/>
</dbReference>
<dbReference type="InterPro" id="IPR001911">
    <property type="entry name" value="Ribosomal_bS21"/>
</dbReference>
<dbReference type="InterPro" id="IPR038380">
    <property type="entry name" value="Ribosomal_bS21_sf"/>
</dbReference>
<dbReference type="NCBIfam" id="TIGR00030">
    <property type="entry name" value="S21p"/>
    <property type="match status" value="1"/>
</dbReference>
<dbReference type="Pfam" id="PF01165">
    <property type="entry name" value="Ribosomal_S21"/>
    <property type="match status" value="1"/>
</dbReference>
<dbReference type="PRINTS" id="PR00976">
    <property type="entry name" value="RIBOSOMALS21"/>
</dbReference>
<evidence type="ECO:0000255" key="1">
    <source>
        <dbReference type="HAMAP-Rule" id="MF_00358"/>
    </source>
</evidence>
<evidence type="ECO:0000256" key="2">
    <source>
        <dbReference type="SAM" id="MobiDB-lite"/>
    </source>
</evidence>
<evidence type="ECO:0000305" key="3"/>
<gene>
    <name evidence="1" type="primary">rpsU</name>
    <name type="ordered locus">Ctha_1358</name>
</gene>
<reference key="1">
    <citation type="submission" date="2008-06" db="EMBL/GenBank/DDBJ databases">
        <title>Complete sequence of Chloroherpeton thalassium ATCC 35110.</title>
        <authorList>
            <consortium name="US DOE Joint Genome Institute"/>
            <person name="Lucas S."/>
            <person name="Copeland A."/>
            <person name="Lapidus A."/>
            <person name="Glavina del Rio T."/>
            <person name="Dalin E."/>
            <person name="Tice H."/>
            <person name="Bruce D."/>
            <person name="Goodwin L."/>
            <person name="Pitluck S."/>
            <person name="Schmutz J."/>
            <person name="Larimer F."/>
            <person name="Land M."/>
            <person name="Hauser L."/>
            <person name="Kyrpides N."/>
            <person name="Mikhailova N."/>
            <person name="Liu Z."/>
            <person name="Li T."/>
            <person name="Zhao F."/>
            <person name="Overmann J."/>
            <person name="Bryant D.A."/>
            <person name="Richardson P."/>
        </authorList>
    </citation>
    <scope>NUCLEOTIDE SEQUENCE [LARGE SCALE GENOMIC DNA]</scope>
    <source>
        <strain>ATCC 35110 / GB-78</strain>
    </source>
</reference>
<proteinExistence type="inferred from homology"/>
<keyword id="KW-1185">Reference proteome</keyword>
<keyword id="KW-0687">Ribonucleoprotein</keyword>
<keyword id="KW-0689">Ribosomal protein</keyword>
<protein>
    <recommendedName>
        <fullName evidence="1">Small ribosomal subunit protein bS21</fullName>
    </recommendedName>
    <alternativeName>
        <fullName evidence="3">30S ribosomal protein S21</fullName>
    </alternativeName>
</protein>
<organism>
    <name type="scientific">Chloroherpeton thalassium (strain ATCC 35110 / GB-78)</name>
    <dbReference type="NCBI Taxonomy" id="517418"/>
    <lineage>
        <taxon>Bacteria</taxon>
        <taxon>Pseudomonadati</taxon>
        <taxon>Chlorobiota</taxon>
        <taxon>Chlorobiia</taxon>
        <taxon>Chlorobiales</taxon>
        <taxon>Chloroherpetonaceae</taxon>
        <taxon>Chloroherpeton</taxon>
    </lineage>
</organism>
<name>RS21_CHLT3</name>
<feature type="chain" id="PRO_1000120600" description="Small ribosomal subunit protein bS21">
    <location>
        <begin position="1"/>
        <end position="65"/>
    </location>
</feature>
<feature type="region of interest" description="Disordered" evidence="2">
    <location>
        <begin position="43"/>
        <end position="65"/>
    </location>
</feature>
<feature type="compositionally biased region" description="Basic residues" evidence="2">
    <location>
        <begin position="48"/>
        <end position="57"/>
    </location>
</feature>
<accession>B3QZC8</accession>
<comment type="similarity">
    <text evidence="1">Belongs to the bacterial ribosomal protein bS21 family.</text>
</comment>